<protein>
    <recommendedName>
        <fullName>Protein IDA-LIKE 4</fullName>
    </recommendedName>
</protein>
<comment type="function">
    <text evidence="4">May be involved in floral abscission.</text>
</comment>
<comment type="subcellular location">
    <subcellularLocation>
        <location evidence="1">Secreted</location>
        <location evidence="1">Extracellular space</location>
    </subcellularLocation>
</comment>
<comment type="tissue specificity">
    <text evidence="3 4">Expressed in mainly in buds. Lower levels in roots. Detected at the base of pedicel, in the floral and funicule abscission zones, in vascular tissues, in guard cells of young seedlings and in hydathodes.</text>
</comment>
<comment type="miscellaneous">
    <text>IDL4 is only partially redundant with IDA.</text>
</comment>
<sequence>MYPTRPHYWRRRLSINRPQAFLLLILCLFFIHHCDASRFSSSSVFYRNPNYDHSNNTVRRGHFLGFLPRHLPVPASAPSRKHNDIGIQALLSP</sequence>
<name>IDL4_ARATH</name>
<dbReference type="EMBL" id="AY642388">
    <property type="protein sequence ID" value="AAT66018.1"/>
    <property type="molecule type" value="Genomic_DNA"/>
</dbReference>
<dbReference type="EMBL" id="AB026654">
    <property type="status" value="NOT_ANNOTATED_CDS"/>
    <property type="molecule type" value="Genomic_DNA"/>
</dbReference>
<dbReference type="EMBL" id="CP002686">
    <property type="protein sequence ID" value="AEE76135.1"/>
    <property type="molecule type" value="Genomic_DNA"/>
</dbReference>
<dbReference type="RefSeq" id="NP_001319583.1">
    <property type="nucleotide sequence ID" value="NM_001338353.1"/>
</dbReference>
<dbReference type="STRING" id="3702.Q6DUW6"/>
<dbReference type="PaxDb" id="3702-AT3G18715.1"/>
<dbReference type="EnsemblPlants" id="AT3G18715.1">
    <property type="protein sequence ID" value="AT3G18715.1"/>
    <property type="gene ID" value="AT3G18715"/>
</dbReference>
<dbReference type="GeneID" id="28719283"/>
<dbReference type="Gramene" id="AT3G18715.1">
    <property type="protein sequence ID" value="AT3G18715.1"/>
    <property type="gene ID" value="AT3G18715"/>
</dbReference>
<dbReference type="KEGG" id="ath:AT3G18715"/>
<dbReference type="Araport" id="AT3G18715"/>
<dbReference type="TAIR" id="AT3G18715">
    <property type="gene designation" value="IDL4"/>
</dbReference>
<dbReference type="HOGENOM" id="CLU_186343_0_1_1"/>
<dbReference type="InParanoid" id="Q6DUW6"/>
<dbReference type="OMA" id="HCDASRF"/>
<dbReference type="OrthoDB" id="1935957at2759"/>
<dbReference type="PhylomeDB" id="Q6DUW6"/>
<dbReference type="PRO" id="PR:Q6DUW6"/>
<dbReference type="Proteomes" id="UP000006548">
    <property type="component" value="Chromosome 3"/>
</dbReference>
<dbReference type="ExpressionAtlas" id="Q6DUW6">
    <property type="expression patterns" value="baseline and differential"/>
</dbReference>
<dbReference type="GO" id="GO:0005576">
    <property type="term" value="C:extracellular region"/>
    <property type="evidence" value="ECO:0007669"/>
    <property type="project" value="UniProtKB-SubCell"/>
</dbReference>
<dbReference type="GO" id="GO:0010227">
    <property type="term" value="P:floral organ abscission"/>
    <property type="evidence" value="ECO:0000315"/>
    <property type="project" value="TAIR"/>
</dbReference>
<dbReference type="InterPro" id="IPR039639">
    <property type="entry name" value="IDA-like"/>
</dbReference>
<dbReference type="PANTHER" id="PTHR33599:SF14">
    <property type="entry name" value="PROTEIN IDA-LIKE 4"/>
    <property type="match status" value="1"/>
</dbReference>
<dbReference type="PANTHER" id="PTHR33599">
    <property type="entry name" value="PROTEIN IDA-LIKE 5"/>
    <property type="match status" value="1"/>
</dbReference>
<proteinExistence type="evidence at transcript level"/>
<feature type="signal peptide" evidence="2">
    <location>
        <begin position="1"/>
        <end position="35"/>
    </location>
</feature>
<feature type="chain" id="PRO_0000383592" description="Protein IDA-LIKE 4">
    <location>
        <begin position="36"/>
        <end position="93"/>
    </location>
</feature>
<keyword id="KW-1185">Reference proteome</keyword>
<keyword id="KW-0964">Secreted</keyword>
<keyword id="KW-0732">Signal</keyword>
<gene>
    <name type="primary">IDL4</name>
    <name type="ordered locus">At3g18715</name>
    <name type="ORF">MVE11</name>
</gene>
<evidence type="ECO:0000250" key="1"/>
<evidence type="ECO:0000255" key="2"/>
<evidence type="ECO:0000269" key="3">
    <source>
    </source>
</evidence>
<evidence type="ECO:0000269" key="4">
    <source>
    </source>
</evidence>
<organism>
    <name type="scientific">Arabidopsis thaliana</name>
    <name type="common">Mouse-ear cress</name>
    <dbReference type="NCBI Taxonomy" id="3702"/>
    <lineage>
        <taxon>Eukaryota</taxon>
        <taxon>Viridiplantae</taxon>
        <taxon>Streptophyta</taxon>
        <taxon>Embryophyta</taxon>
        <taxon>Tracheophyta</taxon>
        <taxon>Spermatophyta</taxon>
        <taxon>Magnoliopsida</taxon>
        <taxon>eudicotyledons</taxon>
        <taxon>Gunneridae</taxon>
        <taxon>Pentapetalae</taxon>
        <taxon>rosids</taxon>
        <taxon>malvids</taxon>
        <taxon>Brassicales</taxon>
        <taxon>Brassicaceae</taxon>
        <taxon>Camelineae</taxon>
        <taxon>Arabidopsis</taxon>
    </lineage>
</organism>
<accession>Q6DUW6</accession>
<reference key="1">
    <citation type="journal article" date="2003" name="Plant Cell">
        <title>Inflorescence deficient in abscission controls floral organ abscission in Arabidopsis and identifies a novel family of putative ligands in plants.</title>
        <authorList>
            <person name="Butenko M.A."/>
            <person name="Patterson S.E."/>
            <person name="Grini P.E."/>
            <person name="Stenvik G.-E."/>
            <person name="Amundsen S.S."/>
            <person name="Mandal A."/>
            <person name="Aalen R.B."/>
        </authorList>
    </citation>
    <scope>NUCLEOTIDE SEQUENCE [GENOMIC DNA]</scope>
    <scope>TISSUE SPECIFICITY</scope>
</reference>
<reference key="2">
    <citation type="journal article" date="2000" name="DNA Res.">
        <title>Structural analysis of Arabidopsis thaliana chromosome 3. I. Sequence features of the regions of 4,504,864 bp covered by sixty P1 and TAC clones.</title>
        <authorList>
            <person name="Sato S."/>
            <person name="Nakamura Y."/>
            <person name="Kaneko T."/>
            <person name="Katoh T."/>
            <person name="Asamizu E."/>
            <person name="Tabata S."/>
        </authorList>
    </citation>
    <scope>NUCLEOTIDE SEQUENCE [LARGE SCALE GENOMIC DNA]</scope>
    <source>
        <strain>cv. Columbia</strain>
    </source>
</reference>
<reference key="3">
    <citation type="journal article" date="2017" name="Plant J.">
        <title>Araport11: a complete reannotation of the Arabidopsis thaliana reference genome.</title>
        <authorList>
            <person name="Cheng C.Y."/>
            <person name="Krishnakumar V."/>
            <person name="Chan A.P."/>
            <person name="Thibaud-Nissen F."/>
            <person name="Schobel S."/>
            <person name="Town C.D."/>
        </authorList>
    </citation>
    <scope>GENOME REANNOTATION</scope>
    <source>
        <strain>cv. Columbia</strain>
    </source>
</reference>
<reference key="4">
    <citation type="journal article" date="2008" name="Plant Cell">
        <title>The EPIP peptide of INFLORESCENCE DEFICIENT IN ABSCISSION is sufficient to induce abscission in arabidopsis through the receptor-like kinases HAESA and HAESA-LIKE2.</title>
        <authorList>
            <person name="Stenvik G.-E."/>
            <person name="Tandstad N.M."/>
            <person name="Guo Y."/>
            <person name="Shi C.-L."/>
            <person name="Kristiansen W."/>
            <person name="Holmgren A."/>
            <person name="Clark S.E."/>
            <person name="Aalen R.B."/>
            <person name="Butenko M.A."/>
        </authorList>
    </citation>
    <scope>FUNCTION</scope>
    <scope>TISSUE SPECIFICITY</scope>
</reference>